<dbReference type="EC" id="2.7.7.-"/>
<dbReference type="EC" id="3.1.21.-"/>
<dbReference type="EMBL" id="L27708">
    <property type="protein sequence ID" value="AAA47955.1"/>
    <property type="molecule type" value="Genomic_DNA"/>
</dbReference>
<dbReference type="SMR" id="Q67620"/>
<dbReference type="Proteomes" id="UP000008266">
    <property type="component" value="Genome"/>
</dbReference>
<dbReference type="GO" id="GO:0042025">
    <property type="term" value="C:host cell nucleus"/>
    <property type="evidence" value="ECO:0007669"/>
    <property type="project" value="UniProtKB-SubCell"/>
</dbReference>
<dbReference type="GO" id="GO:0005524">
    <property type="term" value="F:ATP binding"/>
    <property type="evidence" value="ECO:0007669"/>
    <property type="project" value="UniProtKB-KW"/>
</dbReference>
<dbReference type="GO" id="GO:0003677">
    <property type="term" value="F:DNA binding"/>
    <property type="evidence" value="ECO:0007669"/>
    <property type="project" value="UniProtKB-KW"/>
</dbReference>
<dbReference type="GO" id="GO:0016888">
    <property type="term" value="F:endodeoxyribonuclease activity, producing 5'-phosphomonoesters"/>
    <property type="evidence" value="ECO:0007669"/>
    <property type="project" value="InterPro"/>
</dbReference>
<dbReference type="GO" id="GO:0004386">
    <property type="term" value="F:helicase activity"/>
    <property type="evidence" value="ECO:0007669"/>
    <property type="project" value="UniProtKB-KW"/>
</dbReference>
<dbReference type="GO" id="GO:0046872">
    <property type="term" value="F:metal ion binding"/>
    <property type="evidence" value="ECO:0007669"/>
    <property type="project" value="UniProtKB-KW"/>
</dbReference>
<dbReference type="GO" id="GO:0016779">
    <property type="term" value="F:nucleotidyltransferase activity"/>
    <property type="evidence" value="ECO:0007669"/>
    <property type="project" value="UniProtKB-KW"/>
</dbReference>
<dbReference type="GO" id="GO:0005198">
    <property type="term" value="F:structural molecule activity"/>
    <property type="evidence" value="ECO:0007669"/>
    <property type="project" value="InterPro"/>
</dbReference>
<dbReference type="GO" id="GO:0006260">
    <property type="term" value="P:DNA replication"/>
    <property type="evidence" value="ECO:0007669"/>
    <property type="project" value="UniProtKB-KW"/>
</dbReference>
<dbReference type="FunFam" id="3.40.1310.20:FF:000001">
    <property type="entry name" value="Replication-associated protein"/>
    <property type="match status" value="1"/>
</dbReference>
<dbReference type="Gene3D" id="3.40.1310.20">
    <property type="match status" value="1"/>
</dbReference>
<dbReference type="InterPro" id="IPR049912">
    <property type="entry name" value="CRESS_DNA_REP"/>
</dbReference>
<dbReference type="InterPro" id="IPR001301">
    <property type="entry name" value="Gemini_AL1_CLV"/>
</dbReference>
<dbReference type="InterPro" id="IPR001191">
    <property type="entry name" value="Gemini_AL1_REP"/>
</dbReference>
<dbReference type="InterPro" id="IPR022692">
    <property type="entry name" value="Gemini_AL1_REP_central"/>
</dbReference>
<dbReference type="Pfam" id="PF00799">
    <property type="entry name" value="Gemini_AL1"/>
    <property type="match status" value="1"/>
</dbReference>
<dbReference type="Pfam" id="PF08283">
    <property type="entry name" value="Gemini_AL1_M"/>
    <property type="match status" value="1"/>
</dbReference>
<dbReference type="PRINTS" id="PR00227">
    <property type="entry name" value="GEMCOATAL1"/>
</dbReference>
<dbReference type="PRINTS" id="PR00228">
    <property type="entry name" value="GEMCOATCLVL1"/>
</dbReference>
<dbReference type="SUPFAM" id="SSF55464">
    <property type="entry name" value="Origin of replication-binding domain, RBD-like"/>
    <property type="match status" value="1"/>
</dbReference>
<dbReference type="PROSITE" id="PS52020">
    <property type="entry name" value="CRESS_DNA_REP"/>
    <property type="match status" value="1"/>
</dbReference>
<sequence>MAQPKRFQINAKHYFLTFPKCSLSKEEALEQLLQLQTPTNKKYIKICRELHEDGQPHLHMLIQFEGKFNCKNNRFFDLVSPTRSAHFHPNIQGAKSSSDVKSYIDKDGDVLEWGTFQIDGRSARGGQQTANDAYAKAINAGRKSEALDVIKELAPRDYILHFHNINSNLNMVFQVPPAPYVSPFLSSSFDQVPDELEHWVSENVMDVAARPWRPVSIVIEGDSRTGKTMWARSLGPHNYLCGHLDLSQKVYSNNAWYNVIDDVDPHYLKHFKEFMGSQRDWQSNTKYGKPIQIKGGIPTIFLCNPGPQSSFKEYLDEEKNQTLKNWAIKNAIFVTIHQPLFTNTNQDPTPHRQEETSEA</sequence>
<reference key="1">
    <citation type="submission" date="1994-01" db="EMBL/GenBank/DDBJ databases">
        <title>Characterization of a tomato yellow leaf curl virus isolated from southeast Spain (almeria).</title>
        <authorList>
            <person name="Reina J."/>
            <person name="Cuadrado-Gomez I.M."/>
            <person name="Jimenez J."/>
            <person name="Bejarano E.R."/>
        </authorList>
    </citation>
    <scope>NUCLEOTIDE SEQUENCE [GENOMIC DNA]</scope>
</reference>
<reference key="2">
    <citation type="journal article" date="2004" name="J. Virol.">
        <title>Interaction between a geminivirus replication protein and the plant sumoylation system.</title>
        <authorList>
            <person name="Castillo A.G."/>
            <person name="Kong L.J."/>
            <person name="Hanley-Bowdoin L."/>
            <person name="Bejarano E.R."/>
        </authorList>
    </citation>
    <scope>INTERACTION WITH HOST SCE1</scope>
</reference>
<feature type="chain" id="PRO_0000320113" description="Replication-associated protein">
    <location>
        <begin position="1"/>
        <end position="359"/>
    </location>
</feature>
<feature type="domain" description="CRESS-DNA virus Rep endonuclease" evidence="3">
    <location>
        <begin position="8"/>
        <end position="116"/>
    </location>
</feature>
<feature type="region of interest" description="Binding to RBR1" evidence="1">
    <location>
        <begin position="143"/>
        <end position="153"/>
    </location>
</feature>
<feature type="region of interest" description="Oligomerization" evidence="1">
    <location>
        <begin position="156"/>
        <end position="176"/>
    </location>
</feature>
<feature type="short sequence motif" description="RCR-1" evidence="3">
    <location>
        <begin position="15"/>
        <end position="18"/>
    </location>
</feature>
<feature type="short sequence motif" description="RCR-2" evidence="3">
    <location>
        <begin position="57"/>
        <end position="59"/>
    </location>
</feature>
<feature type="short sequence motif" description="RCR-3" evidence="3">
    <location>
        <begin position="103"/>
        <end position="106"/>
    </location>
</feature>
<feature type="active site" description="For DNA cleavage activity" evidence="3">
    <location>
        <position position="103"/>
    </location>
</feature>
<feature type="binding site" evidence="3">
    <location>
        <position position="49"/>
    </location>
    <ligand>
        <name>a divalent metal cation</name>
        <dbReference type="ChEBI" id="CHEBI:60240"/>
    </ligand>
</feature>
<feature type="binding site" evidence="3">
    <location>
        <position position="57"/>
    </location>
    <ligand>
        <name>a divalent metal cation</name>
        <dbReference type="ChEBI" id="CHEBI:60240"/>
    </ligand>
</feature>
<feature type="binding site" evidence="3">
    <location>
        <position position="59"/>
    </location>
    <ligand>
        <name>a divalent metal cation</name>
        <dbReference type="ChEBI" id="CHEBI:60240"/>
    </ligand>
</feature>
<feature type="binding site" evidence="3">
    <location>
        <position position="107"/>
    </location>
    <ligand>
        <name>a divalent metal cation</name>
        <dbReference type="ChEBI" id="CHEBI:60240"/>
    </ligand>
</feature>
<feature type="binding site" evidence="2">
    <location>
        <begin position="221"/>
        <end position="228"/>
    </location>
    <ligand>
        <name>ATP</name>
        <dbReference type="ChEBI" id="CHEBI:30616"/>
    </ligand>
</feature>
<name>REP_TYCS2</name>
<protein>
    <recommendedName>
        <fullName>Replication-associated protein</fullName>
        <shortName>Rep</shortName>
        <ecNumber>2.7.7.-</ecNumber>
        <ecNumber>3.1.21.-</ecNumber>
    </recommendedName>
    <alternativeName>
        <fullName>Protein C1</fullName>
    </alternativeName>
</protein>
<accession>Q67620</accession>
<organismHost>
    <name type="scientific">Solanum lycopersicum</name>
    <name type="common">Tomato</name>
    <name type="synonym">Lycopersicon esculentum</name>
    <dbReference type="NCBI Taxonomy" id="4081"/>
</organismHost>
<proteinExistence type="evidence at protein level"/>
<organism>
    <name type="scientific">Tomato yellow leaf curl Sardinia virus (isolate Spain-2)</name>
    <name type="common">TYLCSV</name>
    <dbReference type="NCBI Taxonomy" id="221538"/>
    <lineage>
        <taxon>Viruses</taxon>
        <taxon>Monodnaviria</taxon>
        <taxon>Shotokuvirae</taxon>
        <taxon>Cressdnaviricota</taxon>
        <taxon>Repensiviricetes</taxon>
        <taxon>Geplafuvirales</taxon>
        <taxon>Geminiviridae</taxon>
        <taxon>Begomovirus</taxon>
        <taxon>Tomato yellow leaf curl Sardinia virus</taxon>
    </lineage>
</organism>
<keyword id="KW-0067">ATP-binding</keyword>
<keyword id="KW-0190">Covalent protein-DNA linkage</keyword>
<keyword id="KW-0235">DNA replication</keyword>
<keyword id="KW-0238">DNA-binding</keyword>
<keyword id="KW-0255">Endonuclease</keyword>
<keyword id="KW-0347">Helicase</keyword>
<keyword id="KW-1048">Host nucleus</keyword>
<keyword id="KW-0945">Host-virus interaction</keyword>
<keyword id="KW-0378">Hydrolase</keyword>
<keyword id="KW-0479">Metal-binding</keyword>
<keyword id="KW-0511">Multifunctional enzyme</keyword>
<keyword id="KW-0540">Nuclease</keyword>
<keyword id="KW-0547">Nucleotide-binding</keyword>
<keyword id="KW-0548">Nucleotidyltransferase</keyword>
<keyword id="KW-0808">Transferase</keyword>
<comment type="function">
    <text evidence="1">Essential for the replication of viral ssDNA. The closed circular ssDNA genome is first converted to a superhelical dsDNA. Rep binds a specific region at the genome origin of replication. It introduces an endonucleolytic nick within the conserved sequence 5'-TAATATTAC-3' in the intergenic region of the genome present in all geminiviruses, thereby initiating the rolling circle replication (RCR). Following cleavage, binds covalently to the 5'-phosphate of DNA as a tyrosyl ester. The cleavage gives rise to a free 3'-OH that serves as a primer for the cellular DNA polymerase. The polymerase synthesizes the (+) strand DNA by rolling circle mechanism. After one round of replication, a Rep-catalyzed nucleotidyl transfer reaction releases a circular single-stranded virus genome, thereby terminating the replication. Displays origin-specific DNA cleavage, nucleotidyl transferase, ATPase and helicase activities (By similarity).</text>
</comment>
<comment type="cofactor">
    <cofactor evidence="3">
        <name>Mg(2+)</name>
        <dbReference type="ChEBI" id="CHEBI:18420"/>
    </cofactor>
    <cofactor evidence="3">
        <name>Mn(2+)</name>
        <dbReference type="ChEBI" id="CHEBI:29035"/>
    </cofactor>
    <text evidence="3">Divalent metal cations, possibly Mg(2+) or Mn(2+).</text>
</comment>
<comment type="subunit">
    <text evidence="1 4">Homooligomer. Interacts with the replication enhancer protein (REn). Interacts with host retinoblastoma-related protein 1 (RBR1), and may thereby induce the transcription of host replicative enzymes even if the cell is not dividing anymore. Interacts with host PCNA (By similarity). Interacts with host SCE1 protein.</text>
</comment>
<comment type="subcellular location">
    <subcellularLocation>
        <location evidence="1">Host nucleus</location>
    </subcellularLocation>
</comment>
<comment type="domain">
    <text evidence="1">There are 3 rolling circle replication (RCR) motifs. RCR-2 is probably involved in metal coordination. RCR-3 is required for phosphodiester bond cleavage for initiation of RCR (By similarity).</text>
</comment>
<comment type="similarity">
    <text evidence="5">Belongs to the geminiviridae Rep protein family.</text>
</comment>
<gene>
    <name type="ORF">C1</name>
</gene>
<evidence type="ECO:0000250" key="1"/>
<evidence type="ECO:0000255" key="2"/>
<evidence type="ECO:0000255" key="3">
    <source>
        <dbReference type="PROSITE-ProRule" id="PRU01364"/>
    </source>
</evidence>
<evidence type="ECO:0000269" key="4">
    <source>
    </source>
</evidence>
<evidence type="ECO:0000305" key="5"/>